<proteinExistence type="evidence at protein level"/>
<comment type="function">
    <text evidence="1">Transcriptional regulator that specifically binds DNA of heat shock promoter elements (HSE).</text>
</comment>
<comment type="subunit">
    <text evidence="1">Homotrimer.</text>
</comment>
<comment type="subcellular location">
    <subcellularLocation>
        <location evidence="6">Nucleus</location>
    </subcellularLocation>
</comment>
<comment type="developmental stage">
    <text evidence="4">Hardly expressed in young leaves at 14 days after sowing (DAS). Expression detected in adult leaves at 28 DAS and increases with growing stage.</text>
</comment>
<comment type="induction">
    <text evidence="4">By heat stress.</text>
</comment>
<comment type="domain">
    <text evidence="5">The hydrophobic-rich region (HR-A/B) corresponds to the oligomerization domain. AHA motifs are transcriptional activator elements.</text>
</comment>
<comment type="PTM">
    <text evidence="1">Exhibits temperature-dependent phosphorylation.</text>
</comment>
<comment type="similarity">
    <text evidence="6">Belongs to the HSF family. Class A subfamily.</text>
</comment>
<evidence type="ECO:0000250" key="1"/>
<evidence type="ECO:0000255" key="2"/>
<evidence type="ECO:0000256" key="3">
    <source>
        <dbReference type="SAM" id="MobiDB-lite"/>
    </source>
</evidence>
<evidence type="ECO:0000269" key="4">
    <source>
    </source>
</evidence>
<evidence type="ECO:0000269" key="5">
    <source>
    </source>
</evidence>
<evidence type="ECO:0000305" key="6"/>
<evidence type="ECO:0000312" key="7">
    <source>
        <dbReference type="EMBL" id="EEE64456.1"/>
    </source>
</evidence>
<reference key="1">
    <citation type="journal article" date="2002" name="Proc. Natl. Acad. Sci. U.S.A.">
        <title>A rice spotted leaf gene, Spl7, encodes a heat stress transcription factor protein.</title>
        <authorList>
            <person name="Yamanouchi U."/>
            <person name="Yano M."/>
            <person name="Lin H."/>
            <person name="Ashikari M."/>
            <person name="Yamada K."/>
        </authorList>
    </citation>
    <scope>NUCLEOTIDE SEQUENCE [GENOMIC DNA / MRNA]</scope>
    <scope>DEVELOPMENTAL STAGE</scope>
    <scope>INDUCTION</scope>
    <scope>MUTAGENESIS OF TRP-40</scope>
    <source>
        <strain>cv. Nipponbare</strain>
        <strain>cv. Nohrin 8</strain>
        <tissue>Leaf</tissue>
    </source>
</reference>
<reference key="2">
    <citation type="submission" date="2003-07" db="EMBL/GenBank/DDBJ databases">
        <title>Isolation rice heat shock factor by modified yeast one-hybrid system method.</title>
        <authorList>
            <person name="Yao Q.-H."/>
            <person name="Peng R.-H."/>
            <person name="Xiong A.-S."/>
        </authorList>
    </citation>
    <scope>NUCLEOTIDE SEQUENCE [MRNA]</scope>
</reference>
<reference key="3">
    <citation type="journal article" date="2005" name="Mol. Genet. Genomics">
        <title>A fine physical map of the rice chromosome 5.</title>
        <authorList>
            <person name="Cheng C.-H."/>
            <person name="Chung M.C."/>
            <person name="Liu S.-M."/>
            <person name="Chen S.-K."/>
            <person name="Kao F.Y."/>
            <person name="Lin S.-J."/>
            <person name="Hsiao S.-H."/>
            <person name="Tseng I.C."/>
            <person name="Hsing Y.-I.C."/>
            <person name="Wu H.-P."/>
            <person name="Chen C.-S."/>
            <person name="Shaw J.-F."/>
            <person name="Wu J."/>
            <person name="Matsumoto T."/>
            <person name="Sasaki T."/>
            <person name="Chen H.-C."/>
            <person name="Chow T.-Y."/>
        </authorList>
    </citation>
    <scope>NUCLEOTIDE SEQUENCE [LARGE SCALE GENOMIC DNA]</scope>
    <source>
        <strain>cv. Nipponbare</strain>
    </source>
</reference>
<reference key="4">
    <citation type="journal article" date="2005" name="Nature">
        <title>The map-based sequence of the rice genome.</title>
        <authorList>
            <consortium name="International rice genome sequencing project (IRGSP)"/>
        </authorList>
    </citation>
    <scope>NUCLEOTIDE SEQUENCE [LARGE SCALE GENOMIC DNA]</scope>
    <source>
        <strain>cv. Nipponbare</strain>
    </source>
</reference>
<reference key="5">
    <citation type="journal article" date="2008" name="Nucleic Acids Res.">
        <title>The rice annotation project database (RAP-DB): 2008 update.</title>
        <authorList>
            <consortium name="The rice annotation project (RAP)"/>
        </authorList>
    </citation>
    <scope>GENOME REANNOTATION</scope>
    <source>
        <strain>cv. Nipponbare</strain>
    </source>
</reference>
<reference key="6">
    <citation type="journal article" date="2013" name="Rice">
        <title>Improvement of the Oryza sativa Nipponbare reference genome using next generation sequence and optical map data.</title>
        <authorList>
            <person name="Kawahara Y."/>
            <person name="de la Bastide M."/>
            <person name="Hamilton J.P."/>
            <person name="Kanamori H."/>
            <person name="McCombie W.R."/>
            <person name="Ouyang S."/>
            <person name="Schwartz D.C."/>
            <person name="Tanaka T."/>
            <person name="Wu J."/>
            <person name="Zhou S."/>
            <person name="Childs K.L."/>
            <person name="Davidson R.M."/>
            <person name="Lin H."/>
            <person name="Quesada-Ocampo L."/>
            <person name="Vaillancourt B."/>
            <person name="Sakai H."/>
            <person name="Lee S.S."/>
            <person name="Kim J."/>
            <person name="Numa H."/>
            <person name="Itoh T."/>
            <person name="Buell C.R."/>
            <person name="Matsumoto T."/>
        </authorList>
    </citation>
    <scope>GENOME REANNOTATION</scope>
    <source>
        <strain>cv. Nipponbare</strain>
    </source>
</reference>
<reference key="7">
    <citation type="journal article" date="2005" name="PLoS Biol.">
        <title>The genomes of Oryza sativa: a history of duplications.</title>
        <authorList>
            <person name="Yu J."/>
            <person name="Wang J."/>
            <person name="Lin W."/>
            <person name="Li S."/>
            <person name="Li H."/>
            <person name="Zhou J."/>
            <person name="Ni P."/>
            <person name="Dong W."/>
            <person name="Hu S."/>
            <person name="Zeng C."/>
            <person name="Zhang J."/>
            <person name="Zhang Y."/>
            <person name="Li R."/>
            <person name="Xu Z."/>
            <person name="Li S."/>
            <person name="Li X."/>
            <person name="Zheng H."/>
            <person name="Cong L."/>
            <person name="Lin L."/>
            <person name="Yin J."/>
            <person name="Geng J."/>
            <person name="Li G."/>
            <person name="Shi J."/>
            <person name="Liu J."/>
            <person name="Lv H."/>
            <person name="Li J."/>
            <person name="Wang J."/>
            <person name="Deng Y."/>
            <person name="Ran L."/>
            <person name="Shi X."/>
            <person name="Wang X."/>
            <person name="Wu Q."/>
            <person name="Li C."/>
            <person name="Ren X."/>
            <person name="Wang J."/>
            <person name="Wang X."/>
            <person name="Li D."/>
            <person name="Liu D."/>
            <person name="Zhang X."/>
            <person name="Ji Z."/>
            <person name="Zhao W."/>
            <person name="Sun Y."/>
            <person name="Zhang Z."/>
            <person name="Bao J."/>
            <person name="Han Y."/>
            <person name="Dong L."/>
            <person name="Ji J."/>
            <person name="Chen P."/>
            <person name="Wu S."/>
            <person name="Liu J."/>
            <person name="Xiao Y."/>
            <person name="Bu D."/>
            <person name="Tan J."/>
            <person name="Yang L."/>
            <person name="Ye C."/>
            <person name="Zhang J."/>
            <person name="Xu J."/>
            <person name="Zhou Y."/>
            <person name="Yu Y."/>
            <person name="Zhang B."/>
            <person name="Zhuang S."/>
            <person name="Wei H."/>
            <person name="Liu B."/>
            <person name="Lei M."/>
            <person name="Yu H."/>
            <person name="Li Y."/>
            <person name="Xu H."/>
            <person name="Wei S."/>
            <person name="He X."/>
            <person name="Fang L."/>
            <person name="Zhang Z."/>
            <person name="Zhang Y."/>
            <person name="Huang X."/>
            <person name="Su Z."/>
            <person name="Tong W."/>
            <person name="Li J."/>
            <person name="Tong Z."/>
            <person name="Li S."/>
            <person name="Ye J."/>
            <person name="Wang L."/>
            <person name="Fang L."/>
            <person name="Lei T."/>
            <person name="Chen C.-S."/>
            <person name="Chen H.-C."/>
            <person name="Xu Z."/>
            <person name="Li H."/>
            <person name="Huang H."/>
            <person name="Zhang F."/>
            <person name="Xu H."/>
            <person name="Li N."/>
            <person name="Zhao C."/>
            <person name="Li S."/>
            <person name="Dong L."/>
            <person name="Huang Y."/>
            <person name="Li L."/>
            <person name="Xi Y."/>
            <person name="Qi Q."/>
            <person name="Li W."/>
            <person name="Zhang B."/>
            <person name="Hu W."/>
            <person name="Zhang Y."/>
            <person name="Tian X."/>
            <person name="Jiao Y."/>
            <person name="Liang X."/>
            <person name="Jin J."/>
            <person name="Gao L."/>
            <person name="Zheng W."/>
            <person name="Hao B."/>
            <person name="Liu S.-M."/>
            <person name="Wang W."/>
            <person name="Yuan L."/>
            <person name="Cao M."/>
            <person name="McDermott J."/>
            <person name="Samudrala R."/>
            <person name="Wang J."/>
            <person name="Wong G.K.-S."/>
            <person name="Yang H."/>
        </authorList>
    </citation>
    <scope>NUCLEOTIDE SEQUENCE [LARGE SCALE GENOMIC DNA]</scope>
    <source>
        <strain>cv. Nipponbare</strain>
    </source>
</reference>
<reference key="8">
    <citation type="journal article" date="2003" name="Science">
        <title>Collection, mapping, and annotation of over 28,000 cDNA clones from japonica rice.</title>
        <authorList>
            <consortium name="The rice full-length cDNA consortium"/>
        </authorList>
    </citation>
    <scope>NUCLEOTIDE SEQUENCE [LARGE SCALE MRNA]</scope>
    <source>
        <strain>cv. Nipponbare</strain>
    </source>
</reference>
<reference key="9">
    <citation type="journal article" date="2006" name="PLoS Genet.">
        <title>Genomic variation in rice: genesis of highly polymorphic linkage blocks during domestication.</title>
        <authorList>
            <person name="Tang T."/>
            <person name="Lu J."/>
            <person name="Huang J."/>
            <person name="He J."/>
            <person name="McCouch S.R."/>
            <person name="Shen Y."/>
            <person name="Kai Z."/>
            <person name="Purugganan M.D."/>
            <person name="Shi S."/>
            <person name="Wu C.-I."/>
        </authorList>
    </citation>
    <scope>NUCLEOTIDE SEQUENCE [GENOMIC DNA] OF 108-415 AND 109-415</scope>
</reference>
<reference key="10">
    <citation type="journal article" date="2004" name="J. Biosci.">
        <title>Heat stress response in plants: a complex game with chaperones and more than twenty heat stress transcription factors.</title>
        <authorList>
            <person name="Baniwal S.K."/>
            <person name="Bharti K."/>
            <person name="Chan K.Y."/>
            <person name="Fauth M."/>
            <person name="Ganguli A."/>
            <person name="Kotak S."/>
            <person name="Mishra S.K."/>
            <person name="Nover L."/>
            <person name="Port M."/>
            <person name="Scharf K.-D."/>
            <person name="Tripp J."/>
            <person name="Weber C."/>
            <person name="Zielinski D."/>
            <person name="von Koskull-Doering P."/>
        </authorList>
    </citation>
    <scope>GENE FAMILY</scope>
    <scope>NOMENCLATURE</scope>
</reference>
<reference key="11">
    <citation type="journal article" date="2008" name="J. Genet. Genomics">
        <title>Genome-wide analysis of heat shock transcription factor families in rice and Arabidopsis.</title>
        <authorList>
            <person name="Guo J."/>
            <person name="Wu J."/>
            <person name="Ji Q."/>
            <person name="Wang C."/>
            <person name="Luo L."/>
            <person name="Yuan Y."/>
            <person name="Wang Y."/>
            <person name="Wang J."/>
        </authorList>
    </citation>
    <scope>GENE FAMILY</scope>
    <scope>NOMENCLATURE</scope>
    <scope>DOMAIN AHA</scope>
</reference>
<gene>
    <name type="primary">HSFA4D</name>
    <name type="synonym">HSF10</name>
    <name type="synonym">HSF15</name>
    <name type="synonym">SP17</name>
    <name type="synonym">SPL7</name>
    <name type="ordered locus">Os05g0530400</name>
    <name type="ordered locus">LOC_Os05g45410</name>
    <name type="ORF">OJ1131_E09.10</name>
    <name type="ORF">OsJ_018517</name>
    <name evidence="7" type="ORF">OsJ_19305</name>
</gene>
<accession>Q93VB5</accession>
<accession>A0PIP5</accession>
<accession>A0SH76</accession>
<accession>B7EQE5</accession>
<accession>Q93WD1</accession>
<keyword id="KW-0175">Coiled coil</keyword>
<keyword id="KW-0238">DNA-binding</keyword>
<keyword id="KW-0539">Nucleus</keyword>
<keyword id="KW-0597">Phosphoprotein</keyword>
<keyword id="KW-1185">Reference proteome</keyword>
<keyword id="KW-0346">Stress response</keyword>
<keyword id="KW-0804">Transcription</keyword>
<keyword id="KW-0805">Transcription regulation</keyword>
<name>HFA4D_ORYSJ</name>
<sequence>MESSNLGGGGGGGGGGGPPPFLIKTYEMVEDAATNHVVSWGPGGASFVVWNPLDFSRDLLPKYFKHNNFSSFIRQLNTYGFRKIDPERWEFANEDFIRGHTHLLKNIHRRKPVHSHSLQNQINGPLAESERRELEEEINRLKYEKSILVADLQRQNQQQYVINWQMQAMEGRLVAMEQRQKNIVASLCEMLQRRGGAVSSSLLESDHFSKKRRVPKMDLFVDDCAAGEEQKVFQFQGIGTDAPAMPPVLPVTNGEAFDRVELSLVSLEKLFQRANDACTAAEEMYSHGHGGTEPSTAICPEEMNTAPMETGIDLQLPASLHPSSPNTGNAHLHLSTELTESPGFVQSPELPMAEIREDIHVTRYPTQADVNSEIASSTDTSQDGTSETEASHGPTNDVFWERFLTETPRSCLDESERQESPKDDVKAELGCNGFHHREKVDQITEQMGHLASAEQTLHT</sequence>
<organism>
    <name type="scientific">Oryza sativa subsp. japonica</name>
    <name type="common">Rice</name>
    <dbReference type="NCBI Taxonomy" id="39947"/>
    <lineage>
        <taxon>Eukaryota</taxon>
        <taxon>Viridiplantae</taxon>
        <taxon>Streptophyta</taxon>
        <taxon>Embryophyta</taxon>
        <taxon>Tracheophyta</taxon>
        <taxon>Spermatophyta</taxon>
        <taxon>Magnoliopsida</taxon>
        <taxon>Liliopsida</taxon>
        <taxon>Poales</taxon>
        <taxon>Poaceae</taxon>
        <taxon>BOP clade</taxon>
        <taxon>Oryzoideae</taxon>
        <taxon>Oryzeae</taxon>
        <taxon>Oryzinae</taxon>
        <taxon>Oryza</taxon>
        <taxon>Oryza sativa</taxon>
    </lineage>
</organism>
<dbReference type="EMBL" id="AB050095">
    <property type="protein sequence ID" value="BAB71737.1"/>
    <property type="molecule type" value="Genomic_DNA"/>
</dbReference>
<dbReference type="EMBL" id="AB050096">
    <property type="protein sequence ID" value="BAB71738.1"/>
    <property type="molecule type" value="mRNA"/>
</dbReference>
<dbReference type="EMBL" id="AB050097">
    <property type="protein sequence ID" value="BAB71739.1"/>
    <property type="molecule type" value="Genomic_DNA"/>
</dbReference>
<dbReference type="EMBL" id="AB050098">
    <property type="protein sequence ID" value="BAB71740.1"/>
    <property type="molecule type" value="mRNA"/>
</dbReference>
<dbReference type="EMBL" id="AY344492">
    <property type="protein sequence ID" value="AAQ23064.1"/>
    <property type="molecule type" value="mRNA"/>
</dbReference>
<dbReference type="EMBL" id="AC111015">
    <property type="protein sequence ID" value="AAS72351.1"/>
    <property type="molecule type" value="Genomic_DNA"/>
</dbReference>
<dbReference type="EMBL" id="AP008211">
    <property type="protein sequence ID" value="BAF18041.1"/>
    <property type="molecule type" value="Genomic_DNA"/>
</dbReference>
<dbReference type="EMBL" id="AP014961">
    <property type="protein sequence ID" value="BAS95027.1"/>
    <property type="molecule type" value="Genomic_DNA"/>
</dbReference>
<dbReference type="EMBL" id="CM000142">
    <property type="protein sequence ID" value="EAZ35034.1"/>
    <property type="molecule type" value="Genomic_DNA"/>
</dbReference>
<dbReference type="EMBL" id="CM000142">
    <property type="protein sequence ID" value="EEE64456.1"/>
    <property type="molecule type" value="Genomic_DNA"/>
</dbReference>
<dbReference type="EMBL" id="AK100412">
    <property type="protein sequence ID" value="BAG94592.1"/>
    <property type="molecule type" value="mRNA"/>
</dbReference>
<dbReference type="EMBL" id="AY885953">
    <property type="protein sequence ID" value="AAY33578.1"/>
    <property type="molecule type" value="Genomic_DNA"/>
</dbReference>
<dbReference type="EMBL" id="AY885954">
    <property type="protein sequence ID" value="AAY33579.1"/>
    <property type="molecule type" value="Genomic_DNA"/>
</dbReference>
<dbReference type="EMBL" id="AY885955">
    <property type="protein sequence ID" value="AAY33580.1"/>
    <property type="molecule type" value="Genomic_DNA"/>
</dbReference>
<dbReference type="EMBL" id="AY885956">
    <property type="protein sequence ID" value="AAY33581.1"/>
    <property type="molecule type" value="Genomic_DNA"/>
</dbReference>
<dbReference type="EMBL" id="AY885957">
    <property type="protein sequence ID" value="AAY33582.1"/>
    <property type="molecule type" value="Genomic_DNA"/>
</dbReference>
<dbReference type="EMBL" id="AY885958">
    <property type="protein sequence ID" value="AAY33583.1"/>
    <property type="molecule type" value="Genomic_DNA"/>
</dbReference>
<dbReference type="EMBL" id="AY885959">
    <property type="protein sequence ID" value="AAY33584.1"/>
    <property type="molecule type" value="Genomic_DNA"/>
</dbReference>
<dbReference type="EMBL" id="DQ374867">
    <property type="protein sequence ID" value="ABD15811.1"/>
    <property type="molecule type" value="Genomic_DNA"/>
</dbReference>
<dbReference type="EMBL" id="DQ374868">
    <property type="protein sequence ID" value="ABD15812.1"/>
    <property type="molecule type" value="Genomic_DNA"/>
</dbReference>
<dbReference type="EMBL" id="DQ374869">
    <property type="protein sequence ID" value="ABD15813.1"/>
    <property type="molecule type" value="Genomic_DNA"/>
</dbReference>
<dbReference type="EMBL" id="DQ374870">
    <property type="protein sequence ID" value="ABD15814.1"/>
    <property type="molecule type" value="Genomic_DNA"/>
</dbReference>
<dbReference type="RefSeq" id="XP_015639851.1">
    <property type="nucleotide sequence ID" value="XM_015784365.1"/>
</dbReference>
<dbReference type="SMR" id="Q93VB5"/>
<dbReference type="FunCoup" id="Q93VB5">
    <property type="interactions" value="108"/>
</dbReference>
<dbReference type="STRING" id="39947.Q93VB5"/>
<dbReference type="PaxDb" id="39947-Q93VB5"/>
<dbReference type="EnsemblPlants" id="Os05t0530400-01">
    <property type="protein sequence ID" value="Os05t0530400-01"/>
    <property type="gene ID" value="Os05g0530400"/>
</dbReference>
<dbReference type="Gramene" id="Os05t0530400-01">
    <property type="protein sequence ID" value="Os05t0530400-01"/>
    <property type="gene ID" value="Os05g0530400"/>
</dbReference>
<dbReference type="KEGG" id="dosa:Os05g0530400"/>
<dbReference type="eggNOG" id="KOG0627">
    <property type="taxonomic scope" value="Eukaryota"/>
</dbReference>
<dbReference type="HOGENOM" id="CLU_030308_0_0_1"/>
<dbReference type="InParanoid" id="Q93VB5"/>
<dbReference type="OMA" id="PQLEMNE"/>
<dbReference type="OrthoDB" id="60033at2759"/>
<dbReference type="Proteomes" id="UP000000763">
    <property type="component" value="Chromosome 5"/>
</dbReference>
<dbReference type="Proteomes" id="UP000007752">
    <property type="component" value="Chromosome 5"/>
</dbReference>
<dbReference type="Proteomes" id="UP000059680">
    <property type="component" value="Chromosome 5"/>
</dbReference>
<dbReference type="GO" id="GO:0005634">
    <property type="term" value="C:nucleus"/>
    <property type="evidence" value="ECO:0000318"/>
    <property type="project" value="GO_Central"/>
</dbReference>
<dbReference type="GO" id="GO:0003700">
    <property type="term" value="F:DNA-binding transcription factor activity"/>
    <property type="evidence" value="ECO:0000318"/>
    <property type="project" value="GO_Central"/>
</dbReference>
<dbReference type="GO" id="GO:0043565">
    <property type="term" value="F:sequence-specific DNA binding"/>
    <property type="evidence" value="ECO:0007669"/>
    <property type="project" value="InterPro"/>
</dbReference>
<dbReference type="GO" id="GO:0034605">
    <property type="term" value="P:cellular response to heat"/>
    <property type="evidence" value="ECO:0000318"/>
    <property type="project" value="GO_Central"/>
</dbReference>
<dbReference type="GO" id="GO:0006357">
    <property type="term" value="P:regulation of transcription by RNA polymerase II"/>
    <property type="evidence" value="ECO:0000318"/>
    <property type="project" value="GO_Central"/>
</dbReference>
<dbReference type="FunFam" id="1.10.10.10:FF:000057">
    <property type="entry name" value="Heat shock transcription factor 1"/>
    <property type="match status" value="1"/>
</dbReference>
<dbReference type="Gene3D" id="1.10.10.10">
    <property type="entry name" value="Winged helix-like DNA-binding domain superfamily/Winged helix DNA-binding domain"/>
    <property type="match status" value="1"/>
</dbReference>
<dbReference type="InterPro" id="IPR000232">
    <property type="entry name" value="HSF_DNA-bd"/>
</dbReference>
<dbReference type="InterPro" id="IPR036388">
    <property type="entry name" value="WH-like_DNA-bd_sf"/>
</dbReference>
<dbReference type="InterPro" id="IPR036390">
    <property type="entry name" value="WH_DNA-bd_sf"/>
</dbReference>
<dbReference type="PANTHER" id="PTHR10015">
    <property type="entry name" value="HEAT SHOCK TRANSCRIPTION FACTOR"/>
    <property type="match status" value="1"/>
</dbReference>
<dbReference type="PANTHER" id="PTHR10015:SF390">
    <property type="entry name" value="HEAT STRESS TRANSCRIPTION FACTOR A-4D"/>
    <property type="match status" value="1"/>
</dbReference>
<dbReference type="Pfam" id="PF00447">
    <property type="entry name" value="HSF_DNA-bind"/>
    <property type="match status" value="1"/>
</dbReference>
<dbReference type="PRINTS" id="PR00056">
    <property type="entry name" value="HSFDOMAIN"/>
</dbReference>
<dbReference type="SMART" id="SM00415">
    <property type="entry name" value="HSF"/>
    <property type="match status" value="1"/>
</dbReference>
<dbReference type="SUPFAM" id="SSF46785">
    <property type="entry name" value="Winged helix' DNA-binding domain"/>
    <property type="match status" value="1"/>
</dbReference>
<dbReference type="PROSITE" id="PS00434">
    <property type="entry name" value="HSF_DOMAIN"/>
    <property type="match status" value="1"/>
</dbReference>
<protein>
    <recommendedName>
        <fullName>Heat stress transcription factor A-4d</fullName>
    </recommendedName>
    <alternativeName>
        <fullName>Heat stress transcription factor 10</fullName>
        <shortName>rHsf10</shortName>
    </alternativeName>
    <alternativeName>
        <fullName>Heat stress transcription factor 15</fullName>
        <shortName>OsHsf-15</shortName>
    </alternativeName>
    <alternativeName>
        <fullName>Protein SPOTTED LEAF 7</fullName>
    </alternativeName>
</protein>
<feature type="chain" id="PRO_0000350828" description="Heat stress transcription factor A-4d">
    <location>
        <begin position="1"/>
        <end position="459"/>
    </location>
</feature>
<feature type="region of interest" description="Hydrophobic repeat HR-A/B">
    <location>
        <begin position="141"/>
        <end position="191"/>
    </location>
</feature>
<feature type="region of interest" description="Disordered" evidence="3">
    <location>
        <begin position="364"/>
        <end position="398"/>
    </location>
</feature>
<feature type="coiled-coil region" evidence="2">
    <location>
        <begin position="127"/>
        <end position="189"/>
    </location>
</feature>
<feature type="short sequence motif" description="Nuclear localization signal" evidence="2">
    <location>
        <begin position="209"/>
        <end position="213"/>
    </location>
</feature>
<feature type="short sequence motif" description="AHA">
    <location>
        <begin position="397"/>
        <end position="406"/>
    </location>
</feature>
<feature type="compositionally biased region" description="Polar residues" evidence="3">
    <location>
        <begin position="364"/>
        <end position="388"/>
    </location>
</feature>
<feature type="mutagenesis site" description="In spl7; lesion mimic phenotype." evidence="4">
    <original>W</original>
    <variation>C</variation>
    <location>
        <position position="40"/>
    </location>
</feature>